<organism>
    <name type="scientific">Burkholderia pseudomallei (strain 1106a)</name>
    <dbReference type="NCBI Taxonomy" id="357348"/>
    <lineage>
        <taxon>Bacteria</taxon>
        <taxon>Pseudomonadati</taxon>
        <taxon>Pseudomonadota</taxon>
        <taxon>Betaproteobacteria</taxon>
        <taxon>Burkholderiales</taxon>
        <taxon>Burkholderiaceae</taxon>
        <taxon>Burkholderia</taxon>
        <taxon>pseudomallei group</taxon>
    </lineage>
</organism>
<protein>
    <recommendedName>
        <fullName evidence="1">4-hydroxy-tetrahydrodipicolinate reductase</fullName>
        <shortName evidence="1">HTPA reductase</shortName>
        <ecNumber evidence="1">1.17.1.8</ecNumber>
    </recommendedName>
</protein>
<reference key="1">
    <citation type="journal article" date="2010" name="Genome Biol. Evol.">
        <title>Continuing evolution of Burkholderia mallei through genome reduction and large-scale rearrangements.</title>
        <authorList>
            <person name="Losada L."/>
            <person name="Ronning C.M."/>
            <person name="DeShazer D."/>
            <person name="Woods D."/>
            <person name="Fedorova N."/>
            <person name="Kim H.S."/>
            <person name="Shabalina S.A."/>
            <person name="Pearson T.R."/>
            <person name="Brinkac L."/>
            <person name="Tan P."/>
            <person name="Nandi T."/>
            <person name="Crabtree J."/>
            <person name="Badger J."/>
            <person name="Beckstrom-Sternberg S."/>
            <person name="Saqib M."/>
            <person name="Schutzer S.E."/>
            <person name="Keim P."/>
            <person name="Nierman W.C."/>
        </authorList>
    </citation>
    <scope>NUCLEOTIDE SEQUENCE [LARGE SCALE GENOMIC DNA]</scope>
    <source>
        <strain>1106a</strain>
    </source>
</reference>
<gene>
    <name evidence="1" type="primary">dapB</name>
    <name type="ordered locus">BURPS1106A_3453</name>
</gene>
<proteinExistence type="inferred from homology"/>
<accession>A3NZB9</accession>
<evidence type="ECO:0000255" key="1">
    <source>
        <dbReference type="HAMAP-Rule" id="MF_00102"/>
    </source>
</evidence>
<evidence type="ECO:0000305" key="2"/>
<feature type="chain" id="PRO_1000008545" description="4-hydroxy-tetrahydrodipicolinate reductase">
    <location>
        <begin position="1"/>
        <end position="265"/>
    </location>
</feature>
<feature type="active site" description="Proton donor/acceptor" evidence="1">
    <location>
        <position position="153"/>
    </location>
</feature>
<feature type="active site" description="Proton donor" evidence="1">
    <location>
        <position position="157"/>
    </location>
</feature>
<feature type="binding site" evidence="1">
    <location>
        <begin position="7"/>
        <end position="12"/>
    </location>
    <ligand>
        <name>NAD(+)</name>
        <dbReference type="ChEBI" id="CHEBI:57540"/>
    </ligand>
</feature>
<feature type="binding site" evidence="1">
    <location>
        <position position="33"/>
    </location>
    <ligand>
        <name>NAD(+)</name>
        <dbReference type="ChEBI" id="CHEBI:57540"/>
    </ligand>
</feature>
<feature type="binding site" evidence="1">
    <location>
        <position position="34"/>
    </location>
    <ligand>
        <name>NADP(+)</name>
        <dbReference type="ChEBI" id="CHEBI:58349"/>
    </ligand>
</feature>
<feature type="binding site" evidence="1">
    <location>
        <begin position="96"/>
        <end position="98"/>
    </location>
    <ligand>
        <name>NAD(+)</name>
        <dbReference type="ChEBI" id="CHEBI:57540"/>
    </ligand>
</feature>
<feature type="binding site" evidence="1">
    <location>
        <begin position="120"/>
        <end position="123"/>
    </location>
    <ligand>
        <name>NAD(+)</name>
        <dbReference type="ChEBI" id="CHEBI:57540"/>
    </ligand>
</feature>
<feature type="binding site" evidence="1">
    <location>
        <position position="154"/>
    </location>
    <ligand>
        <name>(S)-2,3,4,5-tetrahydrodipicolinate</name>
        <dbReference type="ChEBI" id="CHEBI:16845"/>
    </ligand>
</feature>
<feature type="binding site" evidence="1">
    <location>
        <begin position="163"/>
        <end position="164"/>
    </location>
    <ligand>
        <name>(S)-2,3,4,5-tetrahydrodipicolinate</name>
        <dbReference type="ChEBI" id="CHEBI:16845"/>
    </ligand>
</feature>
<dbReference type="EC" id="1.17.1.8" evidence="1"/>
<dbReference type="EMBL" id="CP000572">
    <property type="protein sequence ID" value="ABN90834.1"/>
    <property type="molecule type" value="Genomic_DNA"/>
</dbReference>
<dbReference type="RefSeq" id="WP_004557251.1">
    <property type="nucleotide sequence ID" value="NC_009076.1"/>
</dbReference>
<dbReference type="SMR" id="A3NZB9"/>
<dbReference type="GeneID" id="93061539"/>
<dbReference type="KEGG" id="bpl:BURPS1106A_3453"/>
<dbReference type="HOGENOM" id="CLU_047479_2_1_4"/>
<dbReference type="UniPathway" id="UPA00034">
    <property type="reaction ID" value="UER00018"/>
</dbReference>
<dbReference type="Proteomes" id="UP000006738">
    <property type="component" value="Chromosome I"/>
</dbReference>
<dbReference type="GO" id="GO:0005829">
    <property type="term" value="C:cytosol"/>
    <property type="evidence" value="ECO:0007669"/>
    <property type="project" value="TreeGrafter"/>
</dbReference>
<dbReference type="GO" id="GO:0008839">
    <property type="term" value="F:4-hydroxy-tetrahydrodipicolinate reductase"/>
    <property type="evidence" value="ECO:0007669"/>
    <property type="project" value="UniProtKB-EC"/>
</dbReference>
<dbReference type="GO" id="GO:0051287">
    <property type="term" value="F:NAD binding"/>
    <property type="evidence" value="ECO:0007669"/>
    <property type="project" value="UniProtKB-UniRule"/>
</dbReference>
<dbReference type="GO" id="GO:0050661">
    <property type="term" value="F:NADP binding"/>
    <property type="evidence" value="ECO:0007669"/>
    <property type="project" value="UniProtKB-UniRule"/>
</dbReference>
<dbReference type="GO" id="GO:0016726">
    <property type="term" value="F:oxidoreductase activity, acting on CH or CH2 groups, NAD or NADP as acceptor"/>
    <property type="evidence" value="ECO:0007669"/>
    <property type="project" value="UniProtKB-UniRule"/>
</dbReference>
<dbReference type="GO" id="GO:0019877">
    <property type="term" value="P:diaminopimelate biosynthetic process"/>
    <property type="evidence" value="ECO:0007669"/>
    <property type="project" value="UniProtKB-UniRule"/>
</dbReference>
<dbReference type="GO" id="GO:0009089">
    <property type="term" value="P:lysine biosynthetic process via diaminopimelate"/>
    <property type="evidence" value="ECO:0007669"/>
    <property type="project" value="UniProtKB-UniRule"/>
</dbReference>
<dbReference type="CDD" id="cd02274">
    <property type="entry name" value="DHDPR_N"/>
    <property type="match status" value="1"/>
</dbReference>
<dbReference type="FunFam" id="3.30.360.10:FF:000004">
    <property type="entry name" value="4-hydroxy-tetrahydrodipicolinate reductase"/>
    <property type="match status" value="1"/>
</dbReference>
<dbReference type="FunFam" id="3.40.50.720:FF:000048">
    <property type="entry name" value="4-hydroxy-tetrahydrodipicolinate reductase"/>
    <property type="match status" value="1"/>
</dbReference>
<dbReference type="Gene3D" id="3.30.360.10">
    <property type="entry name" value="Dihydrodipicolinate Reductase, domain 2"/>
    <property type="match status" value="1"/>
</dbReference>
<dbReference type="Gene3D" id="3.40.50.720">
    <property type="entry name" value="NAD(P)-binding Rossmann-like Domain"/>
    <property type="match status" value="1"/>
</dbReference>
<dbReference type="HAMAP" id="MF_00102">
    <property type="entry name" value="DapB"/>
    <property type="match status" value="1"/>
</dbReference>
<dbReference type="InterPro" id="IPR022663">
    <property type="entry name" value="DapB_C"/>
</dbReference>
<dbReference type="InterPro" id="IPR000846">
    <property type="entry name" value="DapB_N"/>
</dbReference>
<dbReference type="InterPro" id="IPR022664">
    <property type="entry name" value="DapB_N_CS"/>
</dbReference>
<dbReference type="InterPro" id="IPR023940">
    <property type="entry name" value="DHDPR_bac"/>
</dbReference>
<dbReference type="InterPro" id="IPR036291">
    <property type="entry name" value="NAD(P)-bd_dom_sf"/>
</dbReference>
<dbReference type="NCBIfam" id="TIGR00036">
    <property type="entry name" value="dapB"/>
    <property type="match status" value="1"/>
</dbReference>
<dbReference type="PANTHER" id="PTHR20836:SF0">
    <property type="entry name" value="4-HYDROXY-TETRAHYDRODIPICOLINATE REDUCTASE 1, CHLOROPLASTIC-RELATED"/>
    <property type="match status" value="1"/>
</dbReference>
<dbReference type="PANTHER" id="PTHR20836">
    <property type="entry name" value="DIHYDRODIPICOLINATE REDUCTASE"/>
    <property type="match status" value="1"/>
</dbReference>
<dbReference type="Pfam" id="PF05173">
    <property type="entry name" value="DapB_C"/>
    <property type="match status" value="1"/>
</dbReference>
<dbReference type="Pfam" id="PF01113">
    <property type="entry name" value="DapB_N"/>
    <property type="match status" value="1"/>
</dbReference>
<dbReference type="PIRSF" id="PIRSF000161">
    <property type="entry name" value="DHPR"/>
    <property type="match status" value="1"/>
</dbReference>
<dbReference type="SUPFAM" id="SSF55347">
    <property type="entry name" value="Glyceraldehyde-3-phosphate dehydrogenase-like, C-terminal domain"/>
    <property type="match status" value="1"/>
</dbReference>
<dbReference type="SUPFAM" id="SSF51735">
    <property type="entry name" value="NAD(P)-binding Rossmann-fold domains"/>
    <property type="match status" value="1"/>
</dbReference>
<dbReference type="PROSITE" id="PS01298">
    <property type="entry name" value="DAPB"/>
    <property type="match status" value="1"/>
</dbReference>
<comment type="function">
    <text evidence="1">Catalyzes the conversion of 4-hydroxy-tetrahydrodipicolinate (HTPA) to tetrahydrodipicolinate.</text>
</comment>
<comment type="catalytic activity">
    <reaction evidence="1">
        <text>(S)-2,3,4,5-tetrahydrodipicolinate + NAD(+) + H2O = (2S,4S)-4-hydroxy-2,3,4,5-tetrahydrodipicolinate + NADH + H(+)</text>
        <dbReference type="Rhea" id="RHEA:35323"/>
        <dbReference type="ChEBI" id="CHEBI:15377"/>
        <dbReference type="ChEBI" id="CHEBI:15378"/>
        <dbReference type="ChEBI" id="CHEBI:16845"/>
        <dbReference type="ChEBI" id="CHEBI:57540"/>
        <dbReference type="ChEBI" id="CHEBI:57945"/>
        <dbReference type="ChEBI" id="CHEBI:67139"/>
        <dbReference type="EC" id="1.17.1.8"/>
    </reaction>
</comment>
<comment type="catalytic activity">
    <reaction evidence="1">
        <text>(S)-2,3,4,5-tetrahydrodipicolinate + NADP(+) + H2O = (2S,4S)-4-hydroxy-2,3,4,5-tetrahydrodipicolinate + NADPH + H(+)</text>
        <dbReference type="Rhea" id="RHEA:35331"/>
        <dbReference type="ChEBI" id="CHEBI:15377"/>
        <dbReference type="ChEBI" id="CHEBI:15378"/>
        <dbReference type="ChEBI" id="CHEBI:16845"/>
        <dbReference type="ChEBI" id="CHEBI:57783"/>
        <dbReference type="ChEBI" id="CHEBI:58349"/>
        <dbReference type="ChEBI" id="CHEBI:67139"/>
        <dbReference type="EC" id="1.17.1.8"/>
    </reaction>
</comment>
<comment type="pathway">
    <text evidence="1">Amino-acid biosynthesis; L-lysine biosynthesis via DAP pathway; (S)-tetrahydrodipicolinate from L-aspartate: step 4/4.</text>
</comment>
<comment type="subcellular location">
    <subcellularLocation>
        <location evidence="1">Cytoplasm</location>
    </subcellularLocation>
</comment>
<comment type="similarity">
    <text evidence="1">Belongs to the DapB family.</text>
</comment>
<comment type="caution">
    <text evidence="2">Was originally thought to be a dihydrodipicolinate reductase (DHDPR), catalyzing the conversion of dihydrodipicolinate to tetrahydrodipicolinate. However, it was shown in E.coli that the substrate of the enzymatic reaction is not dihydrodipicolinate (DHDP) but in fact (2S,4S)-4-hydroxy-2,3,4,5-tetrahydrodipicolinic acid (HTPA), the product released by the DapA-catalyzed reaction.</text>
</comment>
<keyword id="KW-0028">Amino-acid biosynthesis</keyword>
<keyword id="KW-0963">Cytoplasm</keyword>
<keyword id="KW-0220">Diaminopimelate biosynthesis</keyword>
<keyword id="KW-0457">Lysine biosynthesis</keyword>
<keyword id="KW-0520">NAD</keyword>
<keyword id="KW-0521">NADP</keyword>
<keyword id="KW-0560">Oxidoreductase</keyword>
<sequence length="265" mass="27831">MKIAIAGASGRMGRMLIEAVLAAPDATLAGALDRTGSPQLGQDAGAFLGKQTGVALTDDIERVCAEADYLIDFTRPEGTLAHLDAALRHDVKLVIGTTGFSEPQKAQLRAAGGKIALVFSANMSVGVNVTMKLLEFAAKQFAQGYDIEIIEAHHRHKVDAPSGTALMMGETIAAATGRTLDDCAVYGRHGVTGERDPSTIGFSAIRGGDIVGDHTVLFAGIGERIEITHKSASRVSYAQGALRAARFLAGHQAGFFDMQDVLGLR</sequence>
<name>DAPB_BURP0</name>